<accession>A8H086</accession>
<comment type="function">
    <text evidence="1">Catalyzes the phosphorylation of D-glycero-D-manno-heptose 7-phosphate at the C-1 position to selectively form D-glycero-beta-D-manno-heptose-1,7-bisphosphate.</text>
</comment>
<comment type="function">
    <text evidence="1">Catalyzes the ADP transfer from ATP to D-glycero-beta-D-manno-heptose 1-phosphate, yielding ADP-D-glycero-beta-D-manno-heptose.</text>
</comment>
<comment type="catalytic activity">
    <reaction evidence="1">
        <text>D-glycero-beta-D-manno-heptose 7-phosphate + ATP = D-glycero-beta-D-manno-heptose 1,7-bisphosphate + ADP + H(+)</text>
        <dbReference type="Rhea" id="RHEA:27473"/>
        <dbReference type="ChEBI" id="CHEBI:15378"/>
        <dbReference type="ChEBI" id="CHEBI:30616"/>
        <dbReference type="ChEBI" id="CHEBI:60204"/>
        <dbReference type="ChEBI" id="CHEBI:60208"/>
        <dbReference type="ChEBI" id="CHEBI:456216"/>
        <dbReference type="EC" id="2.7.1.167"/>
    </reaction>
</comment>
<comment type="catalytic activity">
    <reaction evidence="1">
        <text>D-glycero-beta-D-manno-heptose 1-phosphate + ATP + H(+) = ADP-D-glycero-beta-D-manno-heptose + diphosphate</text>
        <dbReference type="Rhea" id="RHEA:27465"/>
        <dbReference type="ChEBI" id="CHEBI:15378"/>
        <dbReference type="ChEBI" id="CHEBI:30616"/>
        <dbReference type="ChEBI" id="CHEBI:33019"/>
        <dbReference type="ChEBI" id="CHEBI:59967"/>
        <dbReference type="ChEBI" id="CHEBI:61593"/>
        <dbReference type="EC" id="2.7.7.70"/>
    </reaction>
</comment>
<comment type="pathway">
    <text evidence="1">Nucleotide-sugar biosynthesis; ADP-L-glycero-beta-D-manno-heptose biosynthesis; ADP-L-glycero-beta-D-manno-heptose from D-glycero-beta-D-manno-heptose 7-phosphate: step 1/4.</text>
</comment>
<comment type="pathway">
    <text evidence="1">Nucleotide-sugar biosynthesis; ADP-L-glycero-beta-D-manno-heptose biosynthesis; ADP-L-glycero-beta-D-manno-heptose from D-glycero-beta-D-manno-heptose 7-phosphate: step 3/4.</text>
</comment>
<comment type="subunit">
    <text evidence="1">Homodimer.</text>
</comment>
<comment type="similarity">
    <text evidence="1">In the N-terminal section; belongs to the carbohydrate kinase PfkB family.</text>
</comment>
<comment type="similarity">
    <text evidence="1">In the C-terminal section; belongs to the cytidylyltransferase family.</text>
</comment>
<comment type="sequence caution" evidence="2">
    <conflict type="erroneous initiation">
        <sequence resource="EMBL-CDS" id="ABV85973"/>
    </conflict>
</comment>
<name>HLDE_SHEPA</name>
<feature type="chain" id="PRO_0000335559" description="Bifunctional protein HldE">
    <location>
        <begin position="1"/>
        <end position="476"/>
    </location>
</feature>
<feature type="region of interest" description="Ribokinase">
    <location>
        <begin position="1"/>
        <end position="319"/>
    </location>
</feature>
<feature type="region of interest" description="Cytidylyltransferase">
    <location>
        <begin position="345"/>
        <end position="476"/>
    </location>
</feature>
<feature type="active site" evidence="1">
    <location>
        <position position="264"/>
    </location>
</feature>
<feature type="binding site" evidence="1">
    <location>
        <begin position="195"/>
        <end position="198"/>
    </location>
    <ligand>
        <name>ATP</name>
        <dbReference type="ChEBI" id="CHEBI:30616"/>
    </ligand>
</feature>
<keyword id="KW-0067">ATP-binding</keyword>
<keyword id="KW-0119">Carbohydrate metabolism</keyword>
<keyword id="KW-0418">Kinase</keyword>
<keyword id="KW-0511">Multifunctional enzyme</keyword>
<keyword id="KW-0547">Nucleotide-binding</keyword>
<keyword id="KW-0548">Nucleotidyltransferase</keyword>
<keyword id="KW-1185">Reference proteome</keyword>
<keyword id="KW-0808">Transferase</keyword>
<reference key="1">
    <citation type="submission" date="2007-10" db="EMBL/GenBank/DDBJ databases">
        <title>Complete sequence of Shewanella pealeana ATCC 700345.</title>
        <authorList>
            <consortium name="US DOE Joint Genome Institute"/>
            <person name="Copeland A."/>
            <person name="Lucas S."/>
            <person name="Lapidus A."/>
            <person name="Barry K."/>
            <person name="Glavina del Rio T."/>
            <person name="Dalin E."/>
            <person name="Tice H."/>
            <person name="Pitluck S."/>
            <person name="Chertkov O."/>
            <person name="Brettin T."/>
            <person name="Bruce D."/>
            <person name="Detter J.C."/>
            <person name="Han C."/>
            <person name="Schmutz J."/>
            <person name="Larimer F."/>
            <person name="Land M."/>
            <person name="Hauser L."/>
            <person name="Kyrpides N."/>
            <person name="Kim E."/>
            <person name="Zhao J.-S.Z."/>
            <person name="Manno D."/>
            <person name="Hawari J."/>
            <person name="Richardson P."/>
        </authorList>
    </citation>
    <scope>NUCLEOTIDE SEQUENCE [LARGE SCALE GENOMIC DNA]</scope>
    <source>
        <strain>ATCC 700345 / ANG-SQ1</strain>
    </source>
</reference>
<gene>
    <name evidence="1" type="primary">hldE</name>
    <name type="ordered locus">Spea_0646</name>
</gene>
<organism>
    <name type="scientific">Shewanella pealeana (strain ATCC 700345 / ANG-SQ1)</name>
    <dbReference type="NCBI Taxonomy" id="398579"/>
    <lineage>
        <taxon>Bacteria</taxon>
        <taxon>Pseudomonadati</taxon>
        <taxon>Pseudomonadota</taxon>
        <taxon>Gammaproteobacteria</taxon>
        <taxon>Alteromonadales</taxon>
        <taxon>Shewanellaceae</taxon>
        <taxon>Shewanella</taxon>
    </lineage>
</organism>
<sequence>MKISLPAFEKAKVLVVGDVMLDRYWAGPTARISPEAPVPVVKVEQLEDRPGGAANVAINIATLGGSASLAGIVGVDETADALTVGVRALGVEPNWHKVADKPTITKLRVMSRNQQLLRLDFEESYSQAESDALLAQSLSELDKVDVAVLSDYAKGALISPQSFIEAANAKGVKVLVDPKGSDFSKYRGAYLLTPNMSEFEVVVGKVESEADLVAKAQGLLQAFDLTAMLVTRSEKGMTLITKDQPELHIPTVAREVYDVTGAGDTVISALATAIAAGSDLPQACAIANTAAGIVVAKLGTSTVTRLELIEALSLSHGESGFGAVSEDQLAYALEQAKLRGERVVMTNGCFDILHAGHVSYLQQARALGDRLIVAVNTDASVKRLKGEGRPVNSEDRRMTVLAALASVDWVVPFSEDTPQRIISRLLPDLLVKGGDYKVEDIAGGSEVMAAGGQVKVLGFEDGISTTAIIQNIMANQ</sequence>
<evidence type="ECO:0000255" key="1">
    <source>
        <dbReference type="HAMAP-Rule" id="MF_01603"/>
    </source>
</evidence>
<evidence type="ECO:0000305" key="2"/>
<dbReference type="EC" id="2.7.1.167" evidence="1"/>
<dbReference type="EC" id="2.7.7.70" evidence="1"/>
<dbReference type="EMBL" id="CP000851">
    <property type="protein sequence ID" value="ABV85973.1"/>
    <property type="status" value="ALT_INIT"/>
    <property type="molecule type" value="Genomic_DNA"/>
</dbReference>
<dbReference type="RefSeq" id="WP_041410824.1">
    <property type="nucleotide sequence ID" value="NC_009901.1"/>
</dbReference>
<dbReference type="SMR" id="A8H086"/>
<dbReference type="STRING" id="398579.Spea_0646"/>
<dbReference type="KEGG" id="spl:Spea_0646"/>
<dbReference type="eggNOG" id="COG0615">
    <property type="taxonomic scope" value="Bacteria"/>
</dbReference>
<dbReference type="eggNOG" id="COG2870">
    <property type="taxonomic scope" value="Bacteria"/>
</dbReference>
<dbReference type="HOGENOM" id="CLU_021150_2_1_6"/>
<dbReference type="OrthoDB" id="9802794at2"/>
<dbReference type="UniPathway" id="UPA00356">
    <property type="reaction ID" value="UER00437"/>
</dbReference>
<dbReference type="UniPathway" id="UPA00356">
    <property type="reaction ID" value="UER00439"/>
</dbReference>
<dbReference type="Proteomes" id="UP000002608">
    <property type="component" value="Chromosome"/>
</dbReference>
<dbReference type="GO" id="GO:0005829">
    <property type="term" value="C:cytosol"/>
    <property type="evidence" value="ECO:0007669"/>
    <property type="project" value="TreeGrafter"/>
</dbReference>
<dbReference type="GO" id="GO:0005524">
    <property type="term" value="F:ATP binding"/>
    <property type="evidence" value="ECO:0007669"/>
    <property type="project" value="UniProtKB-UniRule"/>
</dbReference>
<dbReference type="GO" id="GO:0033785">
    <property type="term" value="F:heptose 7-phosphate kinase activity"/>
    <property type="evidence" value="ECO:0007669"/>
    <property type="project" value="UniProtKB-UniRule"/>
</dbReference>
<dbReference type="GO" id="GO:0033786">
    <property type="term" value="F:heptose-1-phosphate adenylyltransferase activity"/>
    <property type="evidence" value="ECO:0007669"/>
    <property type="project" value="UniProtKB-UniRule"/>
</dbReference>
<dbReference type="GO" id="GO:0016773">
    <property type="term" value="F:phosphotransferase activity, alcohol group as acceptor"/>
    <property type="evidence" value="ECO:0007669"/>
    <property type="project" value="InterPro"/>
</dbReference>
<dbReference type="GO" id="GO:0097171">
    <property type="term" value="P:ADP-L-glycero-beta-D-manno-heptose biosynthetic process"/>
    <property type="evidence" value="ECO:0007669"/>
    <property type="project" value="UniProtKB-UniPathway"/>
</dbReference>
<dbReference type="CDD" id="cd01172">
    <property type="entry name" value="RfaE_like"/>
    <property type="match status" value="1"/>
</dbReference>
<dbReference type="FunFam" id="3.40.1190.20:FF:000002">
    <property type="entry name" value="Bifunctional protein HldE"/>
    <property type="match status" value="1"/>
</dbReference>
<dbReference type="FunFam" id="3.40.50.620:FF:000028">
    <property type="entry name" value="Bifunctional protein HldE"/>
    <property type="match status" value="1"/>
</dbReference>
<dbReference type="Gene3D" id="3.40.1190.20">
    <property type="match status" value="1"/>
</dbReference>
<dbReference type="Gene3D" id="3.40.50.620">
    <property type="entry name" value="HUPs"/>
    <property type="match status" value="1"/>
</dbReference>
<dbReference type="HAMAP" id="MF_01603">
    <property type="entry name" value="HldE"/>
    <property type="match status" value="1"/>
</dbReference>
<dbReference type="InterPro" id="IPR023030">
    <property type="entry name" value="Bifunc_HldE"/>
</dbReference>
<dbReference type="InterPro" id="IPR002173">
    <property type="entry name" value="Carboh/pur_kinase_PfkB_CS"/>
</dbReference>
<dbReference type="InterPro" id="IPR004821">
    <property type="entry name" value="Cyt_trans-like"/>
</dbReference>
<dbReference type="InterPro" id="IPR011611">
    <property type="entry name" value="PfkB_dom"/>
</dbReference>
<dbReference type="InterPro" id="IPR011913">
    <property type="entry name" value="RfaE_dom_I"/>
</dbReference>
<dbReference type="InterPro" id="IPR011914">
    <property type="entry name" value="RfaE_dom_II"/>
</dbReference>
<dbReference type="InterPro" id="IPR029056">
    <property type="entry name" value="Ribokinase-like"/>
</dbReference>
<dbReference type="InterPro" id="IPR014729">
    <property type="entry name" value="Rossmann-like_a/b/a_fold"/>
</dbReference>
<dbReference type="NCBIfam" id="TIGR00125">
    <property type="entry name" value="cyt_tran_rel"/>
    <property type="match status" value="1"/>
</dbReference>
<dbReference type="NCBIfam" id="NF008454">
    <property type="entry name" value="PRK11316.1"/>
    <property type="match status" value="1"/>
</dbReference>
<dbReference type="NCBIfam" id="TIGR02198">
    <property type="entry name" value="rfaE_dom_I"/>
    <property type="match status" value="1"/>
</dbReference>
<dbReference type="NCBIfam" id="TIGR02199">
    <property type="entry name" value="rfaE_dom_II"/>
    <property type="match status" value="1"/>
</dbReference>
<dbReference type="PANTHER" id="PTHR46969">
    <property type="entry name" value="BIFUNCTIONAL PROTEIN HLDE"/>
    <property type="match status" value="1"/>
</dbReference>
<dbReference type="PANTHER" id="PTHR46969:SF1">
    <property type="entry name" value="BIFUNCTIONAL PROTEIN HLDE"/>
    <property type="match status" value="1"/>
</dbReference>
<dbReference type="Pfam" id="PF01467">
    <property type="entry name" value="CTP_transf_like"/>
    <property type="match status" value="1"/>
</dbReference>
<dbReference type="Pfam" id="PF00294">
    <property type="entry name" value="PfkB"/>
    <property type="match status" value="1"/>
</dbReference>
<dbReference type="SUPFAM" id="SSF52374">
    <property type="entry name" value="Nucleotidylyl transferase"/>
    <property type="match status" value="1"/>
</dbReference>
<dbReference type="SUPFAM" id="SSF53613">
    <property type="entry name" value="Ribokinase-like"/>
    <property type="match status" value="1"/>
</dbReference>
<dbReference type="PROSITE" id="PS00583">
    <property type="entry name" value="PFKB_KINASES_1"/>
    <property type="match status" value="1"/>
</dbReference>
<dbReference type="PROSITE" id="PS00584">
    <property type="entry name" value="PFKB_KINASES_2"/>
    <property type="match status" value="1"/>
</dbReference>
<proteinExistence type="inferred from homology"/>
<protein>
    <recommendedName>
        <fullName evidence="1">Bifunctional protein HldE</fullName>
    </recommendedName>
    <domain>
        <recommendedName>
            <fullName evidence="1">D-beta-D-heptose 7-phosphate kinase</fullName>
            <ecNumber evidence="1">2.7.1.167</ecNumber>
        </recommendedName>
        <alternativeName>
            <fullName evidence="1">D-beta-D-heptose 7-phosphotransferase</fullName>
        </alternativeName>
        <alternativeName>
            <fullName evidence="1">D-glycero-beta-D-manno-heptose-7-phosphate kinase</fullName>
        </alternativeName>
    </domain>
    <domain>
        <recommendedName>
            <fullName evidence="1">D-beta-D-heptose 1-phosphate adenylyltransferase</fullName>
            <ecNumber evidence="1">2.7.7.70</ecNumber>
        </recommendedName>
        <alternativeName>
            <fullName evidence="1">D-glycero-beta-D-manno-heptose 1-phosphate adenylyltransferase</fullName>
        </alternativeName>
    </domain>
</protein>